<name>NDK_BACLD</name>
<proteinExistence type="inferred from homology"/>
<evidence type="ECO:0000255" key="1">
    <source>
        <dbReference type="HAMAP-Rule" id="MF_00451"/>
    </source>
</evidence>
<dbReference type="EC" id="2.7.4.6" evidence="1"/>
<dbReference type="EMBL" id="AE017333">
    <property type="protein sequence ID" value="AAU41288.1"/>
    <property type="molecule type" value="Genomic_DNA"/>
</dbReference>
<dbReference type="EMBL" id="CP000002">
    <property type="protein sequence ID" value="AAU23935.1"/>
    <property type="molecule type" value="Genomic_DNA"/>
</dbReference>
<dbReference type="RefSeq" id="WP_003182994.1">
    <property type="nucleotide sequence ID" value="NC_006322.1"/>
</dbReference>
<dbReference type="SMR" id="Q65I26"/>
<dbReference type="STRING" id="279010.BL02781"/>
<dbReference type="GeneID" id="92860992"/>
<dbReference type="KEGG" id="bld:BLi02408"/>
<dbReference type="KEGG" id="bli:BL02781"/>
<dbReference type="eggNOG" id="COG0105">
    <property type="taxonomic scope" value="Bacteria"/>
</dbReference>
<dbReference type="HOGENOM" id="CLU_060216_6_3_9"/>
<dbReference type="Proteomes" id="UP000000606">
    <property type="component" value="Chromosome"/>
</dbReference>
<dbReference type="GO" id="GO:0005737">
    <property type="term" value="C:cytoplasm"/>
    <property type="evidence" value="ECO:0007669"/>
    <property type="project" value="UniProtKB-SubCell"/>
</dbReference>
<dbReference type="GO" id="GO:0005524">
    <property type="term" value="F:ATP binding"/>
    <property type="evidence" value="ECO:0007669"/>
    <property type="project" value="UniProtKB-UniRule"/>
</dbReference>
<dbReference type="GO" id="GO:0046872">
    <property type="term" value="F:metal ion binding"/>
    <property type="evidence" value="ECO:0007669"/>
    <property type="project" value="UniProtKB-KW"/>
</dbReference>
<dbReference type="GO" id="GO:0004550">
    <property type="term" value="F:nucleoside diphosphate kinase activity"/>
    <property type="evidence" value="ECO:0007669"/>
    <property type="project" value="UniProtKB-UniRule"/>
</dbReference>
<dbReference type="GO" id="GO:0006241">
    <property type="term" value="P:CTP biosynthetic process"/>
    <property type="evidence" value="ECO:0007669"/>
    <property type="project" value="UniProtKB-UniRule"/>
</dbReference>
<dbReference type="GO" id="GO:0006183">
    <property type="term" value="P:GTP biosynthetic process"/>
    <property type="evidence" value="ECO:0007669"/>
    <property type="project" value="UniProtKB-UniRule"/>
</dbReference>
<dbReference type="GO" id="GO:0006228">
    <property type="term" value="P:UTP biosynthetic process"/>
    <property type="evidence" value="ECO:0007669"/>
    <property type="project" value="UniProtKB-UniRule"/>
</dbReference>
<dbReference type="CDD" id="cd04413">
    <property type="entry name" value="NDPk_I"/>
    <property type="match status" value="1"/>
</dbReference>
<dbReference type="FunFam" id="3.30.70.141:FF:000002">
    <property type="entry name" value="Nucleoside diphosphate kinase"/>
    <property type="match status" value="1"/>
</dbReference>
<dbReference type="Gene3D" id="3.30.70.141">
    <property type="entry name" value="Nucleoside diphosphate kinase-like domain"/>
    <property type="match status" value="1"/>
</dbReference>
<dbReference type="HAMAP" id="MF_00451">
    <property type="entry name" value="NDP_kinase"/>
    <property type="match status" value="1"/>
</dbReference>
<dbReference type="InterPro" id="IPR034907">
    <property type="entry name" value="NDK-like_dom"/>
</dbReference>
<dbReference type="InterPro" id="IPR036850">
    <property type="entry name" value="NDK-like_dom_sf"/>
</dbReference>
<dbReference type="InterPro" id="IPR001564">
    <property type="entry name" value="Nucleoside_diP_kinase"/>
</dbReference>
<dbReference type="InterPro" id="IPR023005">
    <property type="entry name" value="Nucleoside_diP_kinase_AS"/>
</dbReference>
<dbReference type="NCBIfam" id="NF001908">
    <property type="entry name" value="PRK00668.1"/>
    <property type="match status" value="1"/>
</dbReference>
<dbReference type="PANTHER" id="PTHR11349">
    <property type="entry name" value="NUCLEOSIDE DIPHOSPHATE KINASE"/>
    <property type="match status" value="1"/>
</dbReference>
<dbReference type="Pfam" id="PF00334">
    <property type="entry name" value="NDK"/>
    <property type="match status" value="1"/>
</dbReference>
<dbReference type="PRINTS" id="PR01243">
    <property type="entry name" value="NUCDPKINASE"/>
</dbReference>
<dbReference type="SMART" id="SM00562">
    <property type="entry name" value="NDK"/>
    <property type="match status" value="1"/>
</dbReference>
<dbReference type="SUPFAM" id="SSF54919">
    <property type="entry name" value="Nucleoside diphosphate kinase, NDK"/>
    <property type="match status" value="1"/>
</dbReference>
<dbReference type="PROSITE" id="PS00469">
    <property type="entry name" value="NDPK"/>
    <property type="match status" value="1"/>
</dbReference>
<dbReference type="PROSITE" id="PS51374">
    <property type="entry name" value="NDPK_LIKE"/>
    <property type="match status" value="1"/>
</dbReference>
<reference key="1">
    <citation type="journal article" date="2004" name="J. Mol. Microbiol. Biotechnol.">
        <title>The complete genome sequence of Bacillus licheniformis DSM13, an organism with great industrial potential.</title>
        <authorList>
            <person name="Veith B."/>
            <person name="Herzberg C."/>
            <person name="Steckel S."/>
            <person name="Feesche J."/>
            <person name="Maurer K.H."/>
            <person name="Ehrenreich P."/>
            <person name="Baeumer S."/>
            <person name="Henne A."/>
            <person name="Liesegang H."/>
            <person name="Merkl R."/>
            <person name="Ehrenreich A."/>
            <person name="Gottschalk G."/>
        </authorList>
    </citation>
    <scope>NUCLEOTIDE SEQUENCE [LARGE SCALE GENOMIC DNA]</scope>
    <source>
        <strain>ATCC 14580 / DSM 13 / JCM 2505 / CCUG 7422 / NBRC 12200 / NCIMB 9375 / NCTC 10341 / NRRL NRS-1264 / Gibson 46</strain>
    </source>
</reference>
<reference key="2">
    <citation type="journal article" date="2004" name="Genome Biol.">
        <title>Complete genome sequence of the industrial bacterium Bacillus licheniformis and comparisons with closely related Bacillus species.</title>
        <authorList>
            <person name="Rey M.W."/>
            <person name="Ramaiya P."/>
            <person name="Nelson B.A."/>
            <person name="Brody-Karpin S.D."/>
            <person name="Zaretsky E.J."/>
            <person name="Tang M."/>
            <person name="Lopez de Leon A."/>
            <person name="Xiang H."/>
            <person name="Gusti V."/>
            <person name="Clausen I.G."/>
            <person name="Olsen P.B."/>
            <person name="Rasmussen M.D."/>
            <person name="Andersen J.T."/>
            <person name="Joergensen P.L."/>
            <person name="Larsen T.S."/>
            <person name="Sorokin A."/>
            <person name="Bolotin A."/>
            <person name="Lapidus A."/>
            <person name="Galleron N."/>
            <person name="Ehrlich S.D."/>
            <person name="Berka R.M."/>
        </authorList>
    </citation>
    <scope>NUCLEOTIDE SEQUENCE [LARGE SCALE GENOMIC DNA]</scope>
    <source>
        <strain>ATCC 14580 / DSM 13 / JCM 2505 / CCUG 7422 / NBRC 12200 / NCIMB 9375 / NCTC 10341 / NRRL NRS-1264 / Gibson 46</strain>
    </source>
</reference>
<protein>
    <recommendedName>
        <fullName evidence="1">Nucleoside diphosphate kinase</fullName>
        <shortName evidence="1">NDK</shortName>
        <shortName evidence="1">NDP kinase</shortName>
        <ecNumber evidence="1">2.7.4.6</ecNumber>
    </recommendedName>
    <alternativeName>
        <fullName evidence="1">Nucleoside-2-P kinase</fullName>
    </alternativeName>
</protein>
<accession>Q65I26</accession>
<accession>Q62TH4</accession>
<keyword id="KW-0067">ATP-binding</keyword>
<keyword id="KW-0963">Cytoplasm</keyword>
<keyword id="KW-0418">Kinase</keyword>
<keyword id="KW-0460">Magnesium</keyword>
<keyword id="KW-0479">Metal-binding</keyword>
<keyword id="KW-0546">Nucleotide metabolism</keyword>
<keyword id="KW-0547">Nucleotide-binding</keyword>
<keyword id="KW-0597">Phosphoprotein</keyword>
<keyword id="KW-1185">Reference proteome</keyword>
<keyword id="KW-0808">Transferase</keyword>
<gene>
    <name evidence="1" type="primary">ndk</name>
    <name type="ordered locus">BLi02408</name>
    <name type="ordered locus">BL02781</name>
</gene>
<feature type="chain" id="PRO_0000136944" description="Nucleoside diphosphate kinase">
    <location>
        <begin position="1"/>
        <end position="148"/>
    </location>
</feature>
<feature type="active site" description="Pros-phosphohistidine intermediate" evidence="1">
    <location>
        <position position="115"/>
    </location>
</feature>
<feature type="binding site" evidence="1">
    <location>
        <position position="9"/>
    </location>
    <ligand>
        <name>ATP</name>
        <dbReference type="ChEBI" id="CHEBI:30616"/>
    </ligand>
</feature>
<feature type="binding site" evidence="1">
    <location>
        <position position="57"/>
    </location>
    <ligand>
        <name>ATP</name>
        <dbReference type="ChEBI" id="CHEBI:30616"/>
    </ligand>
</feature>
<feature type="binding site" evidence="1">
    <location>
        <position position="85"/>
    </location>
    <ligand>
        <name>ATP</name>
        <dbReference type="ChEBI" id="CHEBI:30616"/>
    </ligand>
</feature>
<feature type="binding site" evidence="1">
    <location>
        <position position="91"/>
    </location>
    <ligand>
        <name>ATP</name>
        <dbReference type="ChEBI" id="CHEBI:30616"/>
    </ligand>
</feature>
<feature type="binding site" evidence="1">
    <location>
        <position position="102"/>
    </location>
    <ligand>
        <name>ATP</name>
        <dbReference type="ChEBI" id="CHEBI:30616"/>
    </ligand>
</feature>
<feature type="binding site" evidence="1">
    <location>
        <position position="112"/>
    </location>
    <ligand>
        <name>ATP</name>
        <dbReference type="ChEBI" id="CHEBI:30616"/>
    </ligand>
</feature>
<feature type="modified residue" description="Phosphothreonine" evidence="1">
    <location>
        <position position="91"/>
    </location>
</feature>
<feature type="modified residue" description="Phosphoserine" evidence="1">
    <location>
        <position position="122"/>
    </location>
</feature>
<comment type="function">
    <text evidence="1">Major role in the synthesis of nucleoside triphosphates other than ATP. The ATP gamma phosphate is transferred to the NDP beta phosphate via a ping-pong mechanism, using a phosphorylated active-site intermediate.</text>
</comment>
<comment type="catalytic activity">
    <reaction evidence="1">
        <text>a 2'-deoxyribonucleoside 5'-diphosphate + ATP = a 2'-deoxyribonucleoside 5'-triphosphate + ADP</text>
        <dbReference type="Rhea" id="RHEA:44640"/>
        <dbReference type="ChEBI" id="CHEBI:30616"/>
        <dbReference type="ChEBI" id="CHEBI:61560"/>
        <dbReference type="ChEBI" id="CHEBI:73316"/>
        <dbReference type="ChEBI" id="CHEBI:456216"/>
        <dbReference type="EC" id="2.7.4.6"/>
    </reaction>
</comment>
<comment type="catalytic activity">
    <reaction evidence="1">
        <text>a ribonucleoside 5'-diphosphate + ATP = a ribonucleoside 5'-triphosphate + ADP</text>
        <dbReference type="Rhea" id="RHEA:18113"/>
        <dbReference type="ChEBI" id="CHEBI:30616"/>
        <dbReference type="ChEBI" id="CHEBI:57930"/>
        <dbReference type="ChEBI" id="CHEBI:61557"/>
        <dbReference type="ChEBI" id="CHEBI:456216"/>
        <dbReference type="EC" id="2.7.4.6"/>
    </reaction>
</comment>
<comment type="cofactor">
    <cofactor evidence="1">
        <name>Mg(2+)</name>
        <dbReference type="ChEBI" id="CHEBI:18420"/>
    </cofactor>
</comment>
<comment type="subunit">
    <text evidence="1">Homotetramer.</text>
</comment>
<comment type="subcellular location">
    <subcellularLocation>
        <location evidence="1">Cytoplasm</location>
    </subcellularLocation>
</comment>
<comment type="similarity">
    <text evidence="1">Belongs to the NDK family.</text>
</comment>
<sequence length="148" mass="16687">MEKTFVMVKPDGVQRQLIGEILLRFERKGLQLIGAKLMKVSEETAGEHYKEHNGKPFFGELVDFITSGPVFAMVWEGEDAIAVARQLIGKTNPKEALPGTIRGDFGMFVGKNIIHGSDSPESAAREINLFFKEDELVEDEKLMNQWIY</sequence>
<organism>
    <name type="scientific">Bacillus licheniformis (strain ATCC 14580 / DSM 13 / JCM 2505 / CCUG 7422 / NBRC 12200 / NCIMB 9375 / NCTC 10341 / NRRL NRS-1264 / Gibson 46)</name>
    <dbReference type="NCBI Taxonomy" id="279010"/>
    <lineage>
        <taxon>Bacteria</taxon>
        <taxon>Bacillati</taxon>
        <taxon>Bacillota</taxon>
        <taxon>Bacilli</taxon>
        <taxon>Bacillales</taxon>
        <taxon>Bacillaceae</taxon>
        <taxon>Bacillus</taxon>
    </lineage>
</organism>